<dbReference type="EC" id="2.4.99.17" evidence="1"/>
<dbReference type="EMBL" id="AP006716">
    <property type="protein sequence ID" value="BAE04590.1"/>
    <property type="molecule type" value="Genomic_DNA"/>
</dbReference>
<dbReference type="RefSeq" id="WP_011275579.1">
    <property type="nucleotide sequence ID" value="NC_007168.1"/>
</dbReference>
<dbReference type="SMR" id="Q4L6Y5"/>
<dbReference type="GeneID" id="93780683"/>
<dbReference type="KEGG" id="sha:SH1281"/>
<dbReference type="eggNOG" id="COG0809">
    <property type="taxonomic scope" value="Bacteria"/>
</dbReference>
<dbReference type="HOGENOM" id="CLU_039110_1_0_9"/>
<dbReference type="OrthoDB" id="9805933at2"/>
<dbReference type="UniPathway" id="UPA00392"/>
<dbReference type="Proteomes" id="UP000000543">
    <property type="component" value="Chromosome"/>
</dbReference>
<dbReference type="GO" id="GO:0005737">
    <property type="term" value="C:cytoplasm"/>
    <property type="evidence" value="ECO:0007669"/>
    <property type="project" value="UniProtKB-SubCell"/>
</dbReference>
<dbReference type="GO" id="GO:0051075">
    <property type="term" value="F:S-adenosylmethionine:tRNA ribosyltransferase-isomerase activity"/>
    <property type="evidence" value="ECO:0007669"/>
    <property type="project" value="UniProtKB-EC"/>
</dbReference>
<dbReference type="GO" id="GO:0008616">
    <property type="term" value="P:queuosine biosynthetic process"/>
    <property type="evidence" value="ECO:0007669"/>
    <property type="project" value="UniProtKB-UniRule"/>
</dbReference>
<dbReference type="GO" id="GO:0002099">
    <property type="term" value="P:tRNA wobble guanine modification"/>
    <property type="evidence" value="ECO:0007669"/>
    <property type="project" value="TreeGrafter"/>
</dbReference>
<dbReference type="FunFam" id="2.40.10.240:FF:000002">
    <property type="entry name" value="S-adenosylmethionine:tRNA ribosyltransferase-isomerase"/>
    <property type="match status" value="1"/>
</dbReference>
<dbReference type="FunFam" id="3.40.1780.10:FF:000001">
    <property type="entry name" value="S-adenosylmethionine:tRNA ribosyltransferase-isomerase"/>
    <property type="match status" value="1"/>
</dbReference>
<dbReference type="Gene3D" id="2.40.10.240">
    <property type="entry name" value="QueA-like"/>
    <property type="match status" value="1"/>
</dbReference>
<dbReference type="Gene3D" id="3.40.1780.10">
    <property type="entry name" value="QueA-like"/>
    <property type="match status" value="1"/>
</dbReference>
<dbReference type="HAMAP" id="MF_00113">
    <property type="entry name" value="QueA"/>
    <property type="match status" value="1"/>
</dbReference>
<dbReference type="InterPro" id="IPR003699">
    <property type="entry name" value="QueA"/>
</dbReference>
<dbReference type="InterPro" id="IPR042118">
    <property type="entry name" value="QueA_dom1"/>
</dbReference>
<dbReference type="InterPro" id="IPR042119">
    <property type="entry name" value="QueA_dom2"/>
</dbReference>
<dbReference type="InterPro" id="IPR036100">
    <property type="entry name" value="QueA_sf"/>
</dbReference>
<dbReference type="NCBIfam" id="NF001140">
    <property type="entry name" value="PRK00147.1"/>
    <property type="match status" value="1"/>
</dbReference>
<dbReference type="NCBIfam" id="TIGR00113">
    <property type="entry name" value="queA"/>
    <property type="match status" value="1"/>
</dbReference>
<dbReference type="PANTHER" id="PTHR30307">
    <property type="entry name" value="S-ADENOSYLMETHIONINE:TRNA RIBOSYLTRANSFERASE-ISOMERASE"/>
    <property type="match status" value="1"/>
</dbReference>
<dbReference type="PANTHER" id="PTHR30307:SF0">
    <property type="entry name" value="S-ADENOSYLMETHIONINE:TRNA RIBOSYLTRANSFERASE-ISOMERASE"/>
    <property type="match status" value="1"/>
</dbReference>
<dbReference type="Pfam" id="PF02547">
    <property type="entry name" value="Queuosine_synth"/>
    <property type="match status" value="1"/>
</dbReference>
<dbReference type="SUPFAM" id="SSF111337">
    <property type="entry name" value="QueA-like"/>
    <property type="match status" value="1"/>
</dbReference>
<organism>
    <name type="scientific">Staphylococcus haemolyticus (strain JCSC1435)</name>
    <dbReference type="NCBI Taxonomy" id="279808"/>
    <lineage>
        <taxon>Bacteria</taxon>
        <taxon>Bacillati</taxon>
        <taxon>Bacillota</taxon>
        <taxon>Bacilli</taxon>
        <taxon>Bacillales</taxon>
        <taxon>Staphylococcaceae</taxon>
        <taxon>Staphylococcus</taxon>
    </lineage>
</organism>
<reference key="1">
    <citation type="journal article" date="2005" name="J. Bacteriol.">
        <title>Whole-genome sequencing of Staphylococcus haemolyticus uncovers the extreme plasticity of its genome and the evolution of human-colonizing staphylococcal species.</title>
        <authorList>
            <person name="Takeuchi F."/>
            <person name="Watanabe S."/>
            <person name="Baba T."/>
            <person name="Yuzawa H."/>
            <person name="Ito T."/>
            <person name="Morimoto Y."/>
            <person name="Kuroda M."/>
            <person name="Cui L."/>
            <person name="Takahashi M."/>
            <person name="Ankai A."/>
            <person name="Baba S."/>
            <person name="Fukui S."/>
            <person name="Lee J.C."/>
            <person name="Hiramatsu K."/>
        </authorList>
    </citation>
    <scope>NUCLEOTIDE SEQUENCE [LARGE SCALE GENOMIC DNA]</scope>
    <source>
        <strain>JCSC1435</strain>
    </source>
</reference>
<keyword id="KW-0963">Cytoplasm</keyword>
<keyword id="KW-0671">Queuosine biosynthesis</keyword>
<keyword id="KW-0949">S-adenosyl-L-methionine</keyword>
<keyword id="KW-0808">Transferase</keyword>
<evidence type="ECO:0000255" key="1">
    <source>
        <dbReference type="HAMAP-Rule" id="MF_00113"/>
    </source>
</evidence>
<sequence length="341" mass="38900">MNVEEFDYDLPESLIAQTPLKDRDQSRLLVLGRNSGNIEHKHFKDVINYLETGDTLVLNDTRVMPARLFGLKEETGAKVEMLMLTRIENNDWEVLLKPAKRIKVGNKLSFGEGKIIAECIEELDQGGRIMRLHYEGILEERLNELGEMPLPPYIKERLDDPDRYQTVYAKESGSAAAPTAGLHFTDELLDEIRAKGINIAFITLHVGLGTFRPVSVEDINDHEMHSEYYQMTQETANLLNQTKKEGHRIISVGTTSTRTLETIRRDYNEFVAVSGWTDIFIYPGFTYKAIDGLITNFHLPKSTLVMLVSAFSSRENILNAYKEAVKLEYRFFSFGDAMLII</sequence>
<gene>
    <name evidence="1" type="primary">queA</name>
    <name type="ordered locus">SH1281</name>
</gene>
<feature type="chain" id="PRO_0000231376" description="S-adenosylmethionine:tRNA ribosyltransferase-isomerase">
    <location>
        <begin position="1"/>
        <end position="341"/>
    </location>
</feature>
<proteinExistence type="inferred from homology"/>
<comment type="function">
    <text evidence="1">Transfers and isomerizes the ribose moiety from AdoMet to the 7-aminomethyl group of 7-deazaguanine (preQ1-tRNA) to give epoxyqueuosine (oQ-tRNA).</text>
</comment>
<comment type="catalytic activity">
    <reaction evidence="1">
        <text>7-aminomethyl-7-carbaguanosine(34) in tRNA + S-adenosyl-L-methionine = epoxyqueuosine(34) in tRNA + adenine + L-methionine + 2 H(+)</text>
        <dbReference type="Rhea" id="RHEA:32155"/>
        <dbReference type="Rhea" id="RHEA-COMP:10342"/>
        <dbReference type="Rhea" id="RHEA-COMP:18582"/>
        <dbReference type="ChEBI" id="CHEBI:15378"/>
        <dbReference type="ChEBI" id="CHEBI:16708"/>
        <dbReference type="ChEBI" id="CHEBI:57844"/>
        <dbReference type="ChEBI" id="CHEBI:59789"/>
        <dbReference type="ChEBI" id="CHEBI:82833"/>
        <dbReference type="ChEBI" id="CHEBI:194443"/>
        <dbReference type="EC" id="2.4.99.17"/>
    </reaction>
</comment>
<comment type="pathway">
    <text evidence="1">tRNA modification; tRNA-queuosine biosynthesis.</text>
</comment>
<comment type="subunit">
    <text evidence="1">Monomer.</text>
</comment>
<comment type="subcellular location">
    <subcellularLocation>
        <location evidence="1">Cytoplasm</location>
    </subcellularLocation>
</comment>
<comment type="similarity">
    <text evidence="1">Belongs to the QueA family.</text>
</comment>
<protein>
    <recommendedName>
        <fullName evidence="1">S-adenosylmethionine:tRNA ribosyltransferase-isomerase</fullName>
        <ecNumber evidence="1">2.4.99.17</ecNumber>
    </recommendedName>
    <alternativeName>
        <fullName evidence="1">Queuosine biosynthesis protein QueA</fullName>
    </alternativeName>
</protein>
<accession>Q4L6Y5</accession>
<name>QUEA_STAHJ</name>